<accession>Q3IZP4</accession>
<comment type="function">
    <text evidence="3">Promiscuous isomerase that catalyzes epimerization of both ethylmalonyl-CoA and methylmalonyl-CoA. Has thus a dual role in the ethylmalonyl-CoA pathway for acetyl-CoA assimilation required for R.sphaeroides growth on acetate as sole carbon source.</text>
</comment>
<comment type="catalytic activity">
    <reaction evidence="3">
        <text>(2R)-ethylmalonyl-CoA = (2S)-ethylmalonyl-CoA</text>
        <dbReference type="Rhea" id="RHEA:59728"/>
        <dbReference type="ChEBI" id="CHEBI:60909"/>
        <dbReference type="ChEBI" id="CHEBI:85316"/>
    </reaction>
    <physiologicalReaction direction="right-to-left" evidence="6">
        <dbReference type="Rhea" id="RHEA:59730"/>
    </physiologicalReaction>
</comment>
<comment type="catalytic activity">
    <reaction evidence="3">
        <text>(R)-methylmalonyl-CoA = (S)-methylmalonyl-CoA</text>
        <dbReference type="Rhea" id="RHEA:20553"/>
        <dbReference type="ChEBI" id="CHEBI:57326"/>
        <dbReference type="ChEBI" id="CHEBI:57327"/>
        <dbReference type="EC" id="5.1.99.1"/>
    </reaction>
    <physiologicalReaction direction="right-to-left" evidence="6">
        <dbReference type="Rhea" id="RHEA:20555"/>
    </physiologicalReaction>
</comment>
<comment type="cofactor">
    <cofactor evidence="3">
        <name>Co(2+)</name>
        <dbReference type="ChEBI" id="CHEBI:48828"/>
    </cofactor>
    <cofactor evidence="3">
        <name>Mn(2+)</name>
        <dbReference type="ChEBI" id="CHEBI:29035"/>
    </cofactor>
    <text evidence="3">Can use Co(2+) or Mn(2+) as cofactor, but Mg(2+) and Ni(2+) cannot support enzymatic activity.</text>
</comment>
<comment type="biophysicochemical properties">
    <kinetics>
        <KM evidence="3">40 uM for (2S)-ethylmalonyl-CoA</KM>
        <KM evidence="3">80 uM for (2S)-methylmalonyl-CoA</KM>
        <Vmax evidence="3">110.0 umol/min/mg enzyme with (2S)-ethylmalonyl-CoA as substrate</Vmax>
        <Vmax evidence="3">120.0 umol/min/mg enzyme with (2S)-methylmalonyl-CoA as substrate</Vmax>
    </kinetics>
</comment>
<comment type="similarity">
    <text evidence="5">Belongs to the methylmalonyl-CoA epimerase family.</text>
</comment>
<evidence type="ECO:0000250" key="1">
    <source>
        <dbReference type="UniProtKB" id="Q96PE7"/>
    </source>
</evidence>
<evidence type="ECO:0000255" key="2">
    <source>
        <dbReference type="PROSITE-ProRule" id="PRU01163"/>
    </source>
</evidence>
<evidence type="ECO:0000269" key="3">
    <source>
    </source>
</evidence>
<evidence type="ECO:0000303" key="4">
    <source>
    </source>
</evidence>
<evidence type="ECO:0000305" key="5"/>
<evidence type="ECO:0000305" key="6">
    <source>
    </source>
</evidence>
<evidence type="ECO:0000312" key="7">
    <source>
        <dbReference type="EMBL" id="ABA79990.1"/>
    </source>
</evidence>
<name>EPI_CERS4</name>
<feature type="chain" id="PRO_0000447590" description="Ethylmalonyl-CoA/methylmalonyl-CoA epimerase">
    <location>
        <begin position="1"/>
        <end position="134"/>
    </location>
</feature>
<feature type="domain" description="VOC" evidence="2">
    <location>
        <begin position="4"/>
        <end position="134"/>
    </location>
</feature>
<feature type="active site" description="Proton donor/acceptor" evidence="2">
    <location>
        <position position="130"/>
    </location>
</feature>
<feature type="binding site" evidence="1">
    <location>
        <position position="7"/>
    </location>
    <ligand>
        <name>Co(2+)</name>
        <dbReference type="ChEBI" id="CHEBI:48828"/>
    </ligand>
</feature>
<feature type="binding site" evidence="1">
    <location>
        <position position="79"/>
    </location>
    <ligand>
        <name>Co(2+)</name>
        <dbReference type="ChEBI" id="CHEBI:48828"/>
    </ligand>
</feature>
<feature type="binding site" evidence="1">
    <location>
        <position position="130"/>
    </location>
    <ligand>
        <name>Co(2+)</name>
        <dbReference type="ChEBI" id="CHEBI:48828"/>
    </ligand>
</feature>
<gene>
    <name evidence="4" type="primary">epi</name>
    <name evidence="5" type="ordered locus">RHOS4_24220</name>
    <name evidence="7" type="ORF">RSP_0812</name>
</gene>
<proteinExistence type="evidence at protein level"/>
<sequence>MIGRLNHVAIAVPDLEAAAAQYRNTLGAEVGAPQDEPDHGVTVIFITLPNTKIELLHPLGEGSPIAGFLEKNPAGGIHHICYEVEDILAARDRLKEAGARVLGSGEPKIGAHGKPVLFLHPKDFNGCLVELEQV</sequence>
<reference key="1">
    <citation type="submission" date="2005-09" db="EMBL/GenBank/DDBJ databases">
        <title>Complete sequence of chromosome 1 of Rhodobacter sphaeroides 2.4.1.</title>
        <authorList>
            <person name="Copeland A."/>
            <person name="Lucas S."/>
            <person name="Lapidus A."/>
            <person name="Barry K."/>
            <person name="Detter J.C."/>
            <person name="Glavina T."/>
            <person name="Hammon N."/>
            <person name="Israni S."/>
            <person name="Pitluck S."/>
            <person name="Richardson P."/>
            <person name="Mackenzie C."/>
            <person name="Choudhary M."/>
            <person name="Larimer F."/>
            <person name="Hauser L.J."/>
            <person name="Land M."/>
            <person name="Donohue T.J."/>
            <person name="Kaplan S."/>
        </authorList>
    </citation>
    <scope>NUCLEOTIDE SEQUENCE [LARGE SCALE GENOMIC DNA]</scope>
    <source>
        <strain>ATCC 17023 / DSM 158 / JCM 6121 / CCUG 31486 / LMG 2827 / NBRC 12203 / NCIMB 8253 / ATH 2.4.1.</strain>
    </source>
</reference>
<reference key="2">
    <citation type="journal article" date="2008" name="J. Biol. Chem.">
        <title>Ethylmalonyl-CoA mutase from Rhodobacter sphaeroides defines a new subclade of coenzyme B12-dependent acyl-CoA mutases.</title>
        <authorList>
            <person name="Erb T.J."/>
            <person name="Retey J."/>
            <person name="Fuchs G."/>
            <person name="Alber B.E."/>
        </authorList>
    </citation>
    <scope>FUNCTION</scope>
    <scope>CATALYTIC ACTIVITY</scope>
    <scope>COFACTOR</scope>
    <scope>BIOPHYSICOCHEMICAL PROPERTIES</scope>
    <scope>SUBSTRATE SPECIFICITY</scope>
    <source>
        <strain>ATCC 17023 / DSM 158 / JCM 6121 / CCUG 31486 / LMG 2827 / NBRC 12203 / NCIMB 8253 / ATH 2.4.1.</strain>
    </source>
</reference>
<organism>
    <name type="scientific">Cereibacter sphaeroides (strain ATCC 17023 / DSM 158 / JCM 6121 / CCUG 31486 / LMG 2827 / NBRC 12203 / NCIMB 8253 / ATH 2.4.1.)</name>
    <name type="common">Rhodobacter sphaeroides</name>
    <dbReference type="NCBI Taxonomy" id="272943"/>
    <lineage>
        <taxon>Bacteria</taxon>
        <taxon>Pseudomonadati</taxon>
        <taxon>Pseudomonadota</taxon>
        <taxon>Alphaproteobacteria</taxon>
        <taxon>Rhodobacterales</taxon>
        <taxon>Paracoccaceae</taxon>
        <taxon>Cereibacter</taxon>
    </lineage>
</organism>
<dbReference type="EC" id="5.1.99.-" evidence="3"/>
<dbReference type="EC" id="5.1.99.1" evidence="3"/>
<dbReference type="EMBL" id="CP000143">
    <property type="protein sequence ID" value="ABA79990.1"/>
    <property type="molecule type" value="Genomic_DNA"/>
</dbReference>
<dbReference type="RefSeq" id="YP_353891.1">
    <property type="nucleotide sequence ID" value="NC_007493.2"/>
</dbReference>
<dbReference type="SMR" id="Q3IZP4"/>
<dbReference type="STRING" id="272943.RSP_0812"/>
<dbReference type="EnsemblBacteria" id="ABA79990">
    <property type="protein sequence ID" value="ABA79990"/>
    <property type="gene ID" value="RSP_0812"/>
</dbReference>
<dbReference type="KEGG" id="rsp:RSP_0812"/>
<dbReference type="PATRIC" id="fig|272943.9.peg.2771"/>
<dbReference type="eggNOG" id="COG0346">
    <property type="taxonomic scope" value="Bacteria"/>
</dbReference>
<dbReference type="OrthoDB" id="9788468at2"/>
<dbReference type="PhylomeDB" id="Q3IZP4"/>
<dbReference type="BRENDA" id="5.1.99.1">
    <property type="organism ID" value="5383"/>
</dbReference>
<dbReference type="Proteomes" id="UP000002703">
    <property type="component" value="Chromosome 1"/>
</dbReference>
<dbReference type="GO" id="GO:0046872">
    <property type="term" value="F:metal ion binding"/>
    <property type="evidence" value="ECO:0007669"/>
    <property type="project" value="UniProtKB-KW"/>
</dbReference>
<dbReference type="GO" id="GO:0004493">
    <property type="term" value="F:methylmalonyl-CoA epimerase activity"/>
    <property type="evidence" value="ECO:0007669"/>
    <property type="project" value="UniProtKB-EC"/>
</dbReference>
<dbReference type="GO" id="GO:0046491">
    <property type="term" value="P:L-methylmalonyl-CoA metabolic process"/>
    <property type="evidence" value="ECO:0007669"/>
    <property type="project" value="TreeGrafter"/>
</dbReference>
<dbReference type="CDD" id="cd07249">
    <property type="entry name" value="MMCE"/>
    <property type="match status" value="1"/>
</dbReference>
<dbReference type="FunFam" id="3.10.180.10:FF:000003">
    <property type="entry name" value="Methylmalonyl-CoA epimerase, mitochondrial"/>
    <property type="match status" value="1"/>
</dbReference>
<dbReference type="Gene3D" id="3.10.180.10">
    <property type="entry name" value="2,3-Dihydroxybiphenyl 1,2-Dioxygenase, domain 1"/>
    <property type="match status" value="1"/>
</dbReference>
<dbReference type="InterPro" id="IPR029068">
    <property type="entry name" value="Glyas_Bleomycin-R_OHBP_Dase"/>
</dbReference>
<dbReference type="InterPro" id="IPR017515">
    <property type="entry name" value="MeMalonyl-CoA_epimerase"/>
</dbReference>
<dbReference type="InterPro" id="IPR051785">
    <property type="entry name" value="MMCE/EMCE_epimerase"/>
</dbReference>
<dbReference type="InterPro" id="IPR037523">
    <property type="entry name" value="VOC"/>
</dbReference>
<dbReference type="NCBIfam" id="TIGR03081">
    <property type="entry name" value="metmalonyl_epim"/>
    <property type="match status" value="1"/>
</dbReference>
<dbReference type="PANTHER" id="PTHR43048">
    <property type="entry name" value="METHYLMALONYL-COA EPIMERASE"/>
    <property type="match status" value="1"/>
</dbReference>
<dbReference type="PANTHER" id="PTHR43048:SF3">
    <property type="entry name" value="METHYLMALONYL-COA EPIMERASE, MITOCHONDRIAL"/>
    <property type="match status" value="1"/>
</dbReference>
<dbReference type="Pfam" id="PF13669">
    <property type="entry name" value="Glyoxalase_4"/>
    <property type="match status" value="1"/>
</dbReference>
<dbReference type="SUPFAM" id="SSF54593">
    <property type="entry name" value="Glyoxalase/Bleomycin resistance protein/Dihydroxybiphenyl dioxygenase"/>
    <property type="match status" value="1"/>
</dbReference>
<dbReference type="PROSITE" id="PS51819">
    <property type="entry name" value="VOC"/>
    <property type="match status" value="1"/>
</dbReference>
<keyword id="KW-0170">Cobalt</keyword>
<keyword id="KW-0413">Isomerase</keyword>
<keyword id="KW-0464">Manganese</keyword>
<keyword id="KW-0479">Metal-binding</keyword>
<keyword id="KW-1185">Reference proteome</keyword>
<protein>
    <recommendedName>
        <fullName evidence="4">Ethylmalonyl-CoA/methylmalonyl-CoA epimerase</fullName>
        <ecNumber evidence="3">5.1.99.-</ecNumber>
        <ecNumber evidence="3">5.1.99.1</ecNumber>
    </recommendedName>
</protein>